<dbReference type="EMBL" id="BC073021">
    <property type="protein sequence ID" value="AAH73021.1"/>
    <property type="molecule type" value="mRNA"/>
</dbReference>
<dbReference type="RefSeq" id="NP_001085614.1">
    <property type="nucleotide sequence ID" value="NM_001092145.1"/>
</dbReference>
<dbReference type="SMR" id="Q6GPT7"/>
<dbReference type="DNASU" id="444040"/>
<dbReference type="GeneID" id="444040"/>
<dbReference type="KEGG" id="xla:444040"/>
<dbReference type="AGR" id="Xenbase:XB-GENE-5730642"/>
<dbReference type="CTD" id="444040"/>
<dbReference type="Xenbase" id="XB-GENE-5730642">
    <property type="gene designation" value="mix23.S"/>
</dbReference>
<dbReference type="OrthoDB" id="5593818at2759"/>
<dbReference type="Proteomes" id="UP000186698">
    <property type="component" value="Chromosome 2S"/>
</dbReference>
<dbReference type="Bgee" id="444040">
    <property type="expression patterns" value="Expressed in oocyte and 19 other cell types or tissues"/>
</dbReference>
<dbReference type="GO" id="GO:0005758">
    <property type="term" value="C:mitochondrial intermembrane space"/>
    <property type="evidence" value="ECO:0007669"/>
    <property type="project" value="InterPro"/>
</dbReference>
<dbReference type="GO" id="GO:0005739">
    <property type="term" value="C:mitochondrion"/>
    <property type="evidence" value="ECO:0000318"/>
    <property type="project" value="GO_Central"/>
</dbReference>
<dbReference type="InterPro" id="IPR019171">
    <property type="entry name" value="MIX23"/>
</dbReference>
<dbReference type="PANTHER" id="PTHR31905">
    <property type="entry name" value="COILED-COIL DOMAIN-CONTAINING PROTEIN 58"/>
    <property type="match status" value="1"/>
</dbReference>
<dbReference type="PANTHER" id="PTHR31905:SF2">
    <property type="entry name" value="PROTEIN MIX23"/>
    <property type="match status" value="1"/>
</dbReference>
<dbReference type="Pfam" id="PF09774">
    <property type="entry name" value="MIX23"/>
    <property type="match status" value="1"/>
</dbReference>
<gene>
    <name type="primary">mix23</name>
    <name type="synonym">ccdc58</name>
</gene>
<organism>
    <name type="scientific">Xenopus laevis</name>
    <name type="common">African clawed frog</name>
    <dbReference type="NCBI Taxonomy" id="8355"/>
    <lineage>
        <taxon>Eukaryota</taxon>
        <taxon>Metazoa</taxon>
        <taxon>Chordata</taxon>
        <taxon>Craniata</taxon>
        <taxon>Vertebrata</taxon>
        <taxon>Euteleostomi</taxon>
        <taxon>Amphibia</taxon>
        <taxon>Batrachia</taxon>
        <taxon>Anura</taxon>
        <taxon>Pipoidea</taxon>
        <taxon>Pipidae</taxon>
        <taxon>Xenopodinae</taxon>
        <taxon>Xenopus</taxon>
        <taxon>Xenopus</taxon>
    </lineage>
</organism>
<proteinExistence type="evidence at transcript level"/>
<name>MIX23_XENLA</name>
<protein>
    <recommendedName>
        <fullName evidence="2">Protein MIX23</fullName>
    </recommendedName>
    <alternativeName>
        <fullName>Coiled-coil domain-containing protein 58</fullName>
    </alternativeName>
</protein>
<comment type="similarity">
    <text evidence="2">Belongs to the MIX23 family.</text>
</comment>
<sequence length="144" mass="16584">MAAPSEDVSCEDFTEFQEILRVMRTIDDRIVHELNTTLPTVSFAGKIDAGQTCKQLYESLQTAHTSRDKAIKRCIAQTSTAVNILQGERLKDSDNLTLIKLLRKEQSKLKFLKSELNVEEVVNDRSRKVFNERCRLHYKPPKME</sequence>
<reference key="1">
    <citation type="submission" date="2004-06" db="EMBL/GenBank/DDBJ databases">
        <authorList>
            <consortium name="NIH - Xenopus Gene Collection (XGC) project"/>
        </authorList>
    </citation>
    <scope>NUCLEOTIDE SEQUENCE [LARGE SCALE MRNA]</scope>
    <source>
        <tissue>Ovary</tissue>
    </source>
</reference>
<feature type="chain" id="PRO_0000360038" description="Protein MIX23">
    <location>
        <begin position="1"/>
        <end position="144"/>
    </location>
</feature>
<feature type="coiled-coil region" evidence="1">
    <location>
        <begin position="82"/>
        <end position="120"/>
    </location>
</feature>
<evidence type="ECO:0000255" key="1"/>
<evidence type="ECO:0000305" key="2"/>
<keyword id="KW-0175">Coiled coil</keyword>
<keyword id="KW-1185">Reference proteome</keyword>
<accession>Q6GPT7</accession>